<reference key="1">
    <citation type="journal article" date="1987" name="J. Mol. Biol.">
        <title>RNA polymerase II of Drosophila. Relation of its 140,000 Mr subunit to the beta subunit of Escherichia coli RNA polymerase.</title>
        <authorList>
            <person name="Falkenburg D."/>
            <person name="Dworniczak B."/>
            <person name="Faust D.M."/>
            <person name="Bautz E.K.F."/>
        </authorList>
    </citation>
    <scope>NUCLEOTIDE SEQUENCE [GENOMIC DNA]</scope>
    <source>
        <tissue>Embryo</tissue>
    </source>
</reference>
<reference key="2">
    <citation type="journal article" date="2000" name="Science">
        <title>The genome sequence of Drosophila melanogaster.</title>
        <authorList>
            <person name="Adams M.D."/>
            <person name="Celniker S.E."/>
            <person name="Holt R.A."/>
            <person name="Evans C.A."/>
            <person name="Gocayne J.D."/>
            <person name="Amanatides P.G."/>
            <person name="Scherer S.E."/>
            <person name="Li P.W."/>
            <person name="Hoskins R.A."/>
            <person name="Galle R.F."/>
            <person name="George R.A."/>
            <person name="Lewis S.E."/>
            <person name="Richards S."/>
            <person name="Ashburner M."/>
            <person name="Henderson S.N."/>
            <person name="Sutton G.G."/>
            <person name="Wortman J.R."/>
            <person name="Yandell M.D."/>
            <person name="Zhang Q."/>
            <person name="Chen L.X."/>
            <person name="Brandon R.C."/>
            <person name="Rogers Y.-H.C."/>
            <person name="Blazej R.G."/>
            <person name="Champe M."/>
            <person name="Pfeiffer B.D."/>
            <person name="Wan K.H."/>
            <person name="Doyle C."/>
            <person name="Baxter E.G."/>
            <person name="Helt G."/>
            <person name="Nelson C.R."/>
            <person name="Miklos G.L.G."/>
            <person name="Abril J.F."/>
            <person name="Agbayani A."/>
            <person name="An H.-J."/>
            <person name="Andrews-Pfannkoch C."/>
            <person name="Baldwin D."/>
            <person name="Ballew R.M."/>
            <person name="Basu A."/>
            <person name="Baxendale J."/>
            <person name="Bayraktaroglu L."/>
            <person name="Beasley E.M."/>
            <person name="Beeson K.Y."/>
            <person name="Benos P.V."/>
            <person name="Berman B.P."/>
            <person name="Bhandari D."/>
            <person name="Bolshakov S."/>
            <person name="Borkova D."/>
            <person name="Botchan M.R."/>
            <person name="Bouck J."/>
            <person name="Brokstein P."/>
            <person name="Brottier P."/>
            <person name="Burtis K.C."/>
            <person name="Busam D.A."/>
            <person name="Butler H."/>
            <person name="Cadieu E."/>
            <person name="Center A."/>
            <person name="Chandra I."/>
            <person name="Cherry J.M."/>
            <person name="Cawley S."/>
            <person name="Dahlke C."/>
            <person name="Davenport L.B."/>
            <person name="Davies P."/>
            <person name="de Pablos B."/>
            <person name="Delcher A."/>
            <person name="Deng Z."/>
            <person name="Mays A.D."/>
            <person name="Dew I."/>
            <person name="Dietz S.M."/>
            <person name="Dodson K."/>
            <person name="Doup L.E."/>
            <person name="Downes M."/>
            <person name="Dugan-Rocha S."/>
            <person name="Dunkov B.C."/>
            <person name="Dunn P."/>
            <person name="Durbin K.J."/>
            <person name="Evangelista C.C."/>
            <person name="Ferraz C."/>
            <person name="Ferriera S."/>
            <person name="Fleischmann W."/>
            <person name="Fosler C."/>
            <person name="Gabrielian A.E."/>
            <person name="Garg N.S."/>
            <person name="Gelbart W.M."/>
            <person name="Glasser K."/>
            <person name="Glodek A."/>
            <person name="Gong F."/>
            <person name="Gorrell J.H."/>
            <person name="Gu Z."/>
            <person name="Guan P."/>
            <person name="Harris M."/>
            <person name="Harris N.L."/>
            <person name="Harvey D.A."/>
            <person name="Heiman T.J."/>
            <person name="Hernandez J.R."/>
            <person name="Houck J."/>
            <person name="Hostin D."/>
            <person name="Houston K.A."/>
            <person name="Howland T.J."/>
            <person name="Wei M.-H."/>
            <person name="Ibegwam C."/>
            <person name="Jalali M."/>
            <person name="Kalush F."/>
            <person name="Karpen G.H."/>
            <person name="Ke Z."/>
            <person name="Kennison J.A."/>
            <person name="Ketchum K.A."/>
            <person name="Kimmel B.E."/>
            <person name="Kodira C.D."/>
            <person name="Kraft C.L."/>
            <person name="Kravitz S."/>
            <person name="Kulp D."/>
            <person name="Lai Z."/>
            <person name="Lasko P."/>
            <person name="Lei Y."/>
            <person name="Levitsky A.A."/>
            <person name="Li J.H."/>
            <person name="Li Z."/>
            <person name="Liang Y."/>
            <person name="Lin X."/>
            <person name="Liu X."/>
            <person name="Mattei B."/>
            <person name="McIntosh T.C."/>
            <person name="McLeod M.P."/>
            <person name="McPherson D."/>
            <person name="Merkulov G."/>
            <person name="Milshina N.V."/>
            <person name="Mobarry C."/>
            <person name="Morris J."/>
            <person name="Moshrefi A."/>
            <person name="Mount S.M."/>
            <person name="Moy M."/>
            <person name="Murphy B."/>
            <person name="Murphy L."/>
            <person name="Muzny D.M."/>
            <person name="Nelson D.L."/>
            <person name="Nelson D.R."/>
            <person name="Nelson K.A."/>
            <person name="Nixon K."/>
            <person name="Nusskern D.R."/>
            <person name="Pacleb J.M."/>
            <person name="Palazzolo M."/>
            <person name="Pittman G.S."/>
            <person name="Pan S."/>
            <person name="Pollard J."/>
            <person name="Puri V."/>
            <person name="Reese M.G."/>
            <person name="Reinert K."/>
            <person name="Remington K."/>
            <person name="Saunders R.D.C."/>
            <person name="Scheeler F."/>
            <person name="Shen H."/>
            <person name="Shue B.C."/>
            <person name="Siden-Kiamos I."/>
            <person name="Simpson M."/>
            <person name="Skupski M.P."/>
            <person name="Smith T.J."/>
            <person name="Spier E."/>
            <person name="Spradling A.C."/>
            <person name="Stapleton M."/>
            <person name="Strong R."/>
            <person name="Sun E."/>
            <person name="Svirskas R."/>
            <person name="Tector C."/>
            <person name="Turner R."/>
            <person name="Venter E."/>
            <person name="Wang A.H."/>
            <person name="Wang X."/>
            <person name="Wang Z.-Y."/>
            <person name="Wassarman D.A."/>
            <person name="Weinstock G.M."/>
            <person name="Weissenbach J."/>
            <person name="Williams S.M."/>
            <person name="Woodage T."/>
            <person name="Worley K.C."/>
            <person name="Wu D."/>
            <person name="Yang S."/>
            <person name="Yao Q.A."/>
            <person name="Ye J."/>
            <person name="Yeh R.-F."/>
            <person name="Zaveri J.S."/>
            <person name="Zhan M."/>
            <person name="Zhang G."/>
            <person name="Zhao Q."/>
            <person name="Zheng L."/>
            <person name="Zheng X.H."/>
            <person name="Zhong F.N."/>
            <person name="Zhong W."/>
            <person name="Zhou X."/>
            <person name="Zhu S.C."/>
            <person name="Zhu X."/>
            <person name="Smith H.O."/>
            <person name="Gibbs R.A."/>
            <person name="Myers E.W."/>
            <person name="Rubin G.M."/>
            <person name="Venter J.C."/>
        </authorList>
    </citation>
    <scope>NUCLEOTIDE SEQUENCE [LARGE SCALE GENOMIC DNA]</scope>
    <source>
        <strain>Berkeley</strain>
    </source>
</reference>
<reference key="3">
    <citation type="journal article" date="2002" name="Genome Biol.">
        <title>Annotation of the Drosophila melanogaster euchromatic genome: a systematic review.</title>
        <authorList>
            <person name="Misra S."/>
            <person name="Crosby M.A."/>
            <person name="Mungall C.J."/>
            <person name="Matthews B.B."/>
            <person name="Campbell K.S."/>
            <person name="Hradecky P."/>
            <person name="Huang Y."/>
            <person name="Kaminker J.S."/>
            <person name="Millburn G.H."/>
            <person name="Prochnik S.E."/>
            <person name="Smith C.D."/>
            <person name="Tupy J.L."/>
            <person name="Whitfield E.J."/>
            <person name="Bayraktaroglu L."/>
            <person name="Berman B.P."/>
            <person name="Bettencourt B.R."/>
            <person name="Celniker S.E."/>
            <person name="de Grey A.D.N.J."/>
            <person name="Drysdale R.A."/>
            <person name="Harris N.L."/>
            <person name="Richter J."/>
            <person name="Russo S."/>
            <person name="Schroeder A.J."/>
            <person name="Shu S.Q."/>
            <person name="Stapleton M."/>
            <person name="Yamada C."/>
            <person name="Ashburner M."/>
            <person name="Gelbart W.M."/>
            <person name="Rubin G.M."/>
            <person name="Lewis S.E."/>
        </authorList>
    </citation>
    <scope>GENOME REANNOTATION</scope>
    <source>
        <strain>Berkeley</strain>
    </source>
</reference>
<reference key="4">
    <citation type="journal article" date="2002" name="Genome Biol.">
        <title>A Drosophila full-length cDNA resource.</title>
        <authorList>
            <person name="Stapleton M."/>
            <person name="Carlson J.W."/>
            <person name="Brokstein P."/>
            <person name="Yu C."/>
            <person name="Champe M."/>
            <person name="George R.A."/>
            <person name="Guarin H."/>
            <person name="Kronmiller B."/>
            <person name="Pacleb J.M."/>
            <person name="Park S."/>
            <person name="Wan K.H."/>
            <person name="Rubin G.M."/>
            <person name="Celniker S.E."/>
        </authorList>
    </citation>
    <scope>NUCLEOTIDE SEQUENCE [LARGE SCALE MRNA]</scope>
    <source>
        <strain>Berkeley</strain>
        <tissue>Embryo</tissue>
    </source>
</reference>
<reference key="5">
    <citation type="journal article" date="1991" name="Gene">
        <title>Analysis of the promoter region of the housekeeping gene DmRP140 by sequence comparison of Drosophila melanogaster and Drosophila virilis.</title>
        <authorList>
            <person name="Sitzler S."/>
            <person name="Oldenburg I."/>
            <person name="Petersen G."/>
            <person name="Bautz E.K.F."/>
        </authorList>
    </citation>
    <scope>NUCLEOTIDE SEQUENCE [GENOMIC DNA] OF 1-69</scope>
    <source>
        <tissue>Embryo</tissue>
    </source>
</reference>
<organism>
    <name type="scientific">Drosophila melanogaster</name>
    <name type="common">Fruit fly</name>
    <dbReference type="NCBI Taxonomy" id="7227"/>
    <lineage>
        <taxon>Eukaryota</taxon>
        <taxon>Metazoa</taxon>
        <taxon>Ecdysozoa</taxon>
        <taxon>Arthropoda</taxon>
        <taxon>Hexapoda</taxon>
        <taxon>Insecta</taxon>
        <taxon>Pterygota</taxon>
        <taxon>Neoptera</taxon>
        <taxon>Endopterygota</taxon>
        <taxon>Diptera</taxon>
        <taxon>Brachycera</taxon>
        <taxon>Muscomorpha</taxon>
        <taxon>Ephydroidea</taxon>
        <taxon>Drosophilidae</taxon>
        <taxon>Drosophila</taxon>
        <taxon>Sophophora</taxon>
    </lineage>
</organism>
<dbReference type="EC" id="2.7.7.6"/>
<dbReference type="EMBL" id="X05709">
    <property type="protein sequence ID" value="CAA29180.2"/>
    <property type="status" value="ALT_FRAME"/>
    <property type="molecule type" value="Genomic_DNA"/>
</dbReference>
<dbReference type="EMBL" id="AE014297">
    <property type="protein sequence ID" value="AAF55024.1"/>
    <property type="molecule type" value="Genomic_DNA"/>
</dbReference>
<dbReference type="EMBL" id="BT003265">
    <property type="protein sequence ID" value="AAO25022.1"/>
    <property type="molecule type" value="mRNA"/>
</dbReference>
<dbReference type="EMBL" id="M62972">
    <property type="protein sequence ID" value="AAA28476.1"/>
    <property type="molecule type" value="Genomic_DNA"/>
</dbReference>
<dbReference type="PIR" id="A27826">
    <property type="entry name" value="A27826"/>
</dbReference>
<dbReference type="RefSeq" id="NP_001287323.1">
    <property type="nucleotide sequence ID" value="NM_001300394.1"/>
</dbReference>
<dbReference type="RefSeq" id="NP_476706.1">
    <property type="nucleotide sequence ID" value="NM_057358.4"/>
</dbReference>
<dbReference type="PDB" id="9MU9">
    <property type="method" value="EM"/>
    <property type="resolution" value="7.80 A"/>
    <property type="chains" value="B=13-1176"/>
</dbReference>
<dbReference type="PDBsum" id="9MU9"/>
<dbReference type="EMDB" id="EMD-48626"/>
<dbReference type="SMR" id="P08266"/>
<dbReference type="BioGRID" id="66798">
    <property type="interactions" value="8"/>
</dbReference>
<dbReference type="ComplexPortal" id="CPX-2625">
    <property type="entry name" value="DNA-directed RNA polymerase II complex"/>
</dbReference>
<dbReference type="DIP" id="DIP-17498N"/>
<dbReference type="FunCoup" id="P08266">
    <property type="interactions" value="1169"/>
</dbReference>
<dbReference type="IntAct" id="P08266">
    <property type="interactions" value="10"/>
</dbReference>
<dbReference type="STRING" id="7227.FBpp0310926"/>
<dbReference type="PaxDb" id="7227-FBpp0082353"/>
<dbReference type="DNASU" id="41721"/>
<dbReference type="EnsemblMetazoa" id="FBtr0082892">
    <property type="protein sequence ID" value="FBpp0082353"/>
    <property type="gene ID" value="FBgn0262955"/>
</dbReference>
<dbReference type="EnsemblMetazoa" id="FBtr0344600">
    <property type="protein sequence ID" value="FBpp0310926"/>
    <property type="gene ID" value="FBgn0262955"/>
</dbReference>
<dbReference type="GeneID" id="41721"/>
<dbReference type="KEGG" id="dme:Dmel_CG3180"/>
<dbReference type="AGR" id="FB:FBgn0262955"/>
<dbReference type="CTD" id="5431"/>
<dbReference type="FlyBase" id="FBgn0262955">
    <property type="gene designation" value="Polr2B"/>
</dbReference>
<dbReference type="VEuPathDB" id="VectorBase:FBgn0262955"/>
<dbReference type="eggNOG" id="KOG0214">
    <property type="taxonomic scope" value="Eukaryota"/>
</dbReference>
<dbReference type="GeneTree" id="ENSGT00950000183132"/>
<dbReference type="HOGENOM" id="CLU_000524_5_2_1"/>
<dbReference type="InParanoid" id="P08266"/>
<dbReference type="OMA" id="CYDRNDS"/>
<dbReference type="OrthoDB" id="10248617at2759"/>
<dbReference type="PhylomeDB" id="P08266"/>
<dbReference type="Reactome" id="R-DME-112382">
    <property type="pathway name" value="Formation of RNA Pol II elongation complex"/>
</dbReference>
<dbReference type="Reactome" id="R-DME-113418">
    <property type="pathway name" value="Formation of the Early Elongation Complex"/>
</dbReference>
<dbReference type="Reactome" id="R-DME-5578749">
    <property type="pathway name" value="Transcriptional regulation by small RNAs"/>
</dbReference>
<dbReference type="Reactome" id="R-DME-674695">
    <property type="pathway name" value="RNA Polymerase II Pre-transcription Events"/>
</dbReference>
<dbReference type="Reactome" id="R-DME-6781823">
    <property type="pathway name" value="Formation of TC-NER Pre-Incision Complex"/>
</dbReference>
<dbReference type="Reactome" id="R-DME-6782135">
    <property type="pathway name" value="Dual incision in TC-NER"/>
</dbReference>
<dbReference type="Reactome" id="R-DME-6782210">
    <property type="pathway name" value="Gap-filling DNA repair synthesis and ligation in TC-NER"/>
</dbReference>
<dbReference type="Reactome" id="R-DME-6796648">
    <property type="pathway name" value="TP53 Regulates Transcription of DNA Repair Genes"/>
</dbReference>
<dbReference type="Reactome" id="R-DME-6807505">
    <property type="pathway name" value="RNA polymerase II transcribes snRNA genes"/>
</dbReference>
<dbReference type="Reactome" id="R-DME-72086">
    <property type="pathway name" value="mRNA Capping"/>
</dbReference>
<dbReference type="Reactome" id="R-DME-72163">
    <property type="pathway name" value="mRNA Splicing - Major Pathway"/>
</dbReference>
<dbReference type="Reactome" id="R-DME-72165">
    <property type="pathway name" value="mRNA Splicing - Minor Pathway"/>
</dbReference>
<dbReference type="Reactome" id="R-DME-72203">
    <property type="pathway name" value="Processing of Capped Intron-Containing Pre-mRNA"/>
</dbReference>
<dbReference type="Reactome" id="R-DME-73776">
    <property type="pathway name" value="RNA Polymerase II Promoter Escape"/>
</dbReference>
<dbReference type="Reactome" id="R-DME-73779">
    <property type="pathway name" value="RNA Polymerase II Transcription Pre-Initiation And Promoter Opening"/>
</dbReference>
<dbReference type="Reactome" id="R-DME-75953">
    <property type="pathway name" value="RNA Polymerase II Transcription Initiation"/>
</dbReference>
<dbReference type="Reactome" id="R-DME-75955">
    <property type="pathway name" value="RNA Polymerase II Transcription Elongation"/>
</dbReference>
<dbReference type="Reactome" id="R-DME-76042">
    <property type="pathway name" value="RNA Polymerase II Transcription Initiation And Promoter Clearance"/>
</dbReference>
<dbReference type="Reactome" id="R-DME-77075">
    <property type="pathway name" value="RNA Pol II CTD phosphorylation and interaction with CE"/>
</dbReference>
<dbReference type="Reactome" id="R-DME-9018519">
    <property type="pathway name" value="Estrogen-dependent gene expression"/>
</dbReference>
<dbReference type="BioGRID-ORCS" id="41721">
    <property type="hits" value="0 hits in 1 CRISPR screen"/>
</dbReference>
<dbReference type="ChiTaRS" id="RpII140">
    <property type="organism name" value="fly"/>
</dbReference>
<dbReference type="GenomeRNAi" id="41721"/>
<dbReference type="PRO" id="PR:P08266"/>
<dbReference type="Proteomes" id="UP000000803">
    <property type="component" value="Chromosome 3R"/>
</dbReference>
<dbReference type="Bgee" id="FBgn0262955">
    <property type="expression patterns" value="Expressed in eye disc (Drosophila) and 104 other cell types or tissues"/>
</dbReference>
<dbReference type="ExpressionAtlas" id="P08266">
    <property type="expression patterns" value="baseline and differential"/>
</dbReference>
<dbReference type="GO" id="GO:0005739">
    <property type="term" value="C:mitochondrion"/>
    <property type="evidence" value="ECO:0007669"/>
    <property type="project" value="GOC"/>
</dbReference>
<dbReference type="GO" id="GO:0005665">
    <property type="term" value="C:RNA polymerase II, core complex"/>
    <property type="evidence" value="ECO:0000314"/>
    <property type="project" value="FlyBase"/>
</dbReference>
<dbReference type="GO" id="GO:0003677">
    <property type="term" value="F:DNA binding"/>
    <property type="evidence" value="ECO:0007669"/>
    <property type="project" value="InterPro"/>
</dbReference>
<dbReference type="GO" id="GO:0003899">
    <property type="term" value="F:DNA-directed RNA polymerase activity"/>
    <property type="evidence" value="ECO:0000303"/>
    <property type="project" value="UniProtKB"/>
</dbReference>
<dbReference type="GO" id="GO:0032549">
    <property type="term" value="F:ribonucleoside binding"/>
    <property type="evidence" value="ECO:0007669"/>
    <property type="project" value="InterPro"/>
</dbReference>
<dbReference type="GO" id="GO:0008270">
    <property type="term" value="F:zinc ion binding"/>
    <property type="evidence" value="ECO:0007669"/>
    <property type="project" value="UniProtKB-KW"/>
</dbReference>
<dbReference type="GO" id="GO:0006366">
    <property type="term" value="P:transcription by RNA polymerase II"/>
    <property type="evidence" value="ECO:0000250"/>
    <property type="project" value="FlyBase"/>
</dbReference>
<dbReference type="CDD" id="cd00653">
    <property type="entry name" value="RNA_pol_B_RPB2"/>
    <property type="match status" value="1"/>
</dbReference>
<dbReference type="FunFam" id="2.40.50.150:FF:000002">
    <property type="entry name" value="DNA-directed RNA polymerase subunit beta"/>
    <property type="match status" value="1"/>
</dbReference>
<dbReference type="FunFam" id="3.90.1070.20:FF:000001">
    <property type="entry name" value="DNA-directed RNA polymerase subunit beta"/>
    <property type="match status" value="1"/>
</dbReference>
<dbReference type="FunFam" id="3.90.1100.10:FF:000003">
    <property type="entry name" value="DNA-directed RNA polymerase subunit beta"/>
    <property type="match status" value="1"/>
</dbReference>
<dbReference type="FunFam" id="3.90.1100.10:FF:000043">
    <property type="entry name" value="DNA-directed RNA polymerase subunit beta"/>
    <property type="match status" value="1"/>
</dbReference>
<dbReference type="FunFam" id="3.90.1110.10:FF:000002">
    <property type="entry name" value="DNA-directed RNA polymerase subunit beta"/>
    <property type="match status" value="1"/>
</dbReference>
<dbReference type="FunFam" id="3.90.1800.10:FF:000002">
    <property type="entry name" value="DNA-directed RNA polymerase subunit beta"/>
    <property type="match status" value="1"/>
</dbReference>
<dbReference type="Gene3D" id="2.40.50.150">
    <property type="match status" value="1"/>
</dbReference>
<dbReference type="Gene3D" id="3.90.1070.20">
    <property type="match status" value="1"/>
</dbReference>
<dbReference type="Gene3D" id="2.40.270.10">
    <property type="entry name" value="DNA-directed RNA polymerase, subunit 2, domain 6"/>
    <property type="match status" value="1"/>
</dbReference>
<dbReference type="Gene3D" id="3.90.1800.10">
    <property type="entry name" value="RNA polymerase alpha subunit dimerisation domain"/>
    <property type="match status" value="1"/>
</dbReference>
<dbReference type="Gene3D" id="3.90.1110.10">
    <property type="entry name" value="RNA polymerase Rpb2, domain 2"/>
    <property type="match status" value="1"/>
</dbReference>
<dbReference type="InterPro" id="IPR015712">
    <property type="entry name" value="DNA-dir_RNA_pol_su2"/>
</dbReference>
<dbReference type="InterPro" id="IPR007120">
    <property type="entry name" value="DNA-dir_RNAP_su2_dom"/>
</dbReference>
<dbReference type="InterPro" id="IPR037033">
    <property type="entry name" value="DNA-dir_RNAP_su2_hyb_sf"/>
</dbReference>
<dbReference type="InterPro" id="IPR007121">
    <property type="entry name" value="RNA_pol_bsu_CS"/>
</dbReference>
<dbReference type="InterPro" id="IPR007644">
    <property type="entry name" value="RNA_pol_bsu_protrusion"/>
</dbReference>
<dbReference type="InterPro" id="IPR007642">
    <property type="entry name" value="RNA_pol_Rpb2_2"/>
</dbReference>
<dbReference type="InterPro" id="IPR037034">
    <property type="entry name" value="RNA_pol_Rpb2_2_sf"/>
</dbReference>
<dbReference type="InterPro" id="IPR007645">
    <property type="entry name" value="RNA_pol_Rpb2_3"/>
</dbReference>
<dbReference type="InterPro" id="IPR007646">
    <property type="entry name" value="RNA_pol_Rpb2_4"/>
</dbReference>
<dbReference type="InterPro" id="IPR007647">
    <property type="entry name" value="RNA_pol_Rpb2_5"/>
</dbReference>
<dbReference type="InterPro" id="IPR007641">
    <property type="entry name" value="RNA_pol_Rpb2_7"/>
</dbReference>
<dbReference type="InterPro" id="IPR014724">
    <property type="entry name" value="RNA_pol_RPB2_OB-fold"/>
</dbReference>
<dbReference type="NCBIfam" id="NF007175">
    <property type="entry name" value="PRK09606.1"/>
    <property type="match status" value="1"/>
</dbReference>
<dbReference type="PANTHER" id="PTHR20856">
    <property type="entry name" value="DNA-DIRECTED RNA POLYMERASE I SUBUNIT 2"/>
    <property type="match status" value="1"/>
</dbReference>
<dbReference type="Pfam" id="PF04563">
    <property type="entry name" value="RNA_pol_Rpb2_1"/>
    <property type="match status" value="1"/>
</dbReference>
<dbReference type="Pfam" id="PF04561">
    <property type="entry name" value="RNA_pol_Rpb2_2"/>
    <property type="match status" value="1"/>
</dbReference>
<dbReference type="Pfam" id="PF04565">
    <property type="entry name" value="RNA_pol_Rpb2_3"/>
    <property type="match status" value="1"/>
</dbReference>
<dbReference type="Pfam" id="PF04566">
    <property type="entry name" value="RNA_pol_Rpb2_4"/>
    <property type="match status" value="1"/>
</dbReference>
<dbReference type="Pfam" id="PF04567">
    <property type="entry name" value="RNA_pol_Rpb2_5"/>
    <property type="match status" value="1"/>
</dbReference>
<dbReference type="Pfam" id="PF00562">
    <property type="entry name" value="RNA_pol_Rpb2_6"/>
    <property type="match status" value="1"/>
</dbReference>
<dbReference type="Pfam" id="PF04560">
    <property type="entry name" value="RNA_pol_Rpb2_7"/>
    <property type="match status" value="1"/>
</dbReference>
<dbReference type="SUPFAM" id="SSF64484">
    <property type="entry name" value="beta and beta-prime subunits of DNA dependent RNA-polymerase"/>
    <property type="match status" value="1"/>
</dbReference>
<dbReference type="PROSITE" id="PS01166">
    <property type="entry name" value="RNA_POL_BETA"/>
    <property type="match status" value="1"/>
</dbReference>
<name>RPB2_DROME</name>
<accession>P08266</accession>
<accession>Q04155</accession>
<accession>Q95027</accession>
<accession>Q9VFM7</accession>
<sequence>MMYDNEEELYEEENAEEISHELWQEACWIVINAYFDEKGLVRQQLDSFDEFIQMSVQRIVEDSPAIELQAEAQHTSGEVETPPRFSLKFEQIYLSKPTHWEKDGSPSPMMPNEARLRNLTYSAPLYVDITKTKNVEGLDPVETQHQKTFIGKIPIMLRSTYCLLSQLTDRDLTELNECPLDPGGYFIINGSEKVLIAQEKMATNTVYVFSMKDGKYAFKTEIRSCLEHSSRPTSTLWVNMMARGSQNIKKSAIGQRIIAILPYIKQEIPIMIVFRALGFVADRDILEHIIYDFDDPEMMEMVKPSLDEAFVVQEQNVALNFIGARGARPGVTKDKRIKYAKEILQKEMLPHVGVSDFCETKKAYFLGYMVHRLLLASLGRRELDDRDHYGNKRLDLAGPLLAFLFRGLFKNLMKEVRMYTQKFIDRGKDFNLELAIKTNIITDGLRYSLATGNWGDQKKAHQARAGVSQVLNRLTFASTLSHLRRVNSPIGRDGKLAKPRQLHNTLWGMLCPAETPEGAAVGLVKNLALMAYISVGSQPSPILEFLEEWSMENLEEIAPSAIADATKIFVNGCWVGIHRDPEQLMATLRKLRRQMDIIVSEVSMIRDIRDREIRIYTDAGRICRPLLIVENGSLLLKKTHVEMLKERDYNNYSWQVLVASGVVEYIDTLEEETVMIAMSPYDLKQDKDYAYCTTYTHCEIHPAMILGVCASIIPFPDHNQSPRNTYQSAMGKQAMGVYITNFHVRMDTLAHVLYYPMKPLVTTRSMEYLRFRELPAGINSIVAILCYTGYNQEDSVILNASAVERGFFRSVFYRSYKDSENKRVGDQEENFEKPHRGTCQGMRNAHYDKLDDDGIIAPGIRVSGDDVVIGKTITLPENDDELDSNTKRFSKRDASTFLRNSETGIVDQVMLTLNSEGYKFCKIRVRSVRIPQIGDKFASRHGQKGTCGIQYRQEDMAFTCEGLAPDIIINPHAIPSRMTIGHLIECLQGKLGSNKGEIGDATPFNDAVNVQKISTFLQEYGYHLRGNEVMYNGHTGRKINAQVFLGPTYYQRLKHMVDDKIHSRARGPVQILVRQPMEGRARDGGLRFGEMERDCQISHGAAQFLRERLFEVSDPYRVHICNFCGLIAIANLRNNTFECKGCKNKTQISQVRLPYAAKLLFQELMSMNIAPRLMVT</sequence>
<comment type="function">
    <text evidence="1">DNA-dependent RNA polymerase catalyzes the transcription of DNA into RNA using the four ribonucleoside triphosphates as substrates. Second largest component of RNA polymerase II which synthesizes mRNA precursors and many functional non-coding RNAs. Proposed to contribute to the polymerase catalytic activity and forms the polymerase active center together with the largest subunit. Pol II is the central component of the basal RNA polymerase II transcription machinery. It is composed of mobile elements that move relative to each other. Polr2B is part of the core element with the central large cleft, the clamp element that moves to open and close the cleft and the jaws that are thought to grab the incoming DNA template (By similarity).</text>
</comment>
<comment type="catalytic activity">
    <reaction>
        <text>RNA(n) + a ribonucleoside 5'-triphosphate = RNA(n+1) + diphosphate</text>
        <dbReference type="Rhea" id="RHEA:21248"/>
        <dbReference type="Rhea" id="RHEA-COMP:14527"/>
        <dbReference type="Rhea" id="RHEA-COMP:17342"/>
        <dbReference type="ChEBI" id="CHEBI:33019"/>
        <dbReference type="ChEBI" id="CHEBI:61557"/>
        <dbReference type="ChEBI" id="CHEBI:140395"/>
        <dbReference type="EC" id="2.7.7.6"/>
    </reaction>
</comment>
<comment type="subunit">
    <text evidence="1">Component of the RNA polymerase II (Pol II) complex consisting of 12 subunits.</text>
</comment>
<comment type="subcellular location">
    <subcellularLocation>
        <location evidence="1">Nucleus</location>
    </subcellularLocation>
</comment>
<comment type="miscellaneous">
    <text evidence="1">The binding of ribonucleoside triphosphate to the RNA polymerase II transcribing complex probably involves a two-step mechanism. The initial binding seems to occur at the entry (E) site and involves a magnesium ion coordinated by three conserved aspartate residues of the two largest RNA Pol II subunits (By similarity).</text>
</comment>
<comment type="similarity">
    <text evidence="4">Belongs to the RNA polymerase beta chain family.</text>
</comment>
<comment type="sequence caution" evidence="4">
    <conflict type="frameshift">
        <sequence resource="EMBL-CDS" id="CAA29180"/>
    </conflict>
    <text>The frameshift leads to an erroneous gene model prediction.</text>
</comment>
<proteinExistence type="evidence at protein level"/>
<evidence type="ECO:0000250" key="1"/>
<evidence type="ECO:0000303" key="2">
    <source>
    </source>
</evidence>
<evidence type="ECO:0000303" key="3">
    <source>
    </source>
</evidence>
<evidence type="ECO:0000305" key="4"/>
<evidence type="ECO:0000312" key="5">
    <source>
        <dbReference type="FlyBase" id="FBgn0262955"/>
    </source>
</evidence>
<protein>
    <recommendedName>
        <fullName>DNA-directed RNA polymerase II subunit RPB2</fullName>
        <shortName>RNA polymerase II subunit 2</shortName>
        <shortName>RNA polymerase II subunit B2</shortName>
        <ecNumber>2.7.7.6</ecNumber>
    </recommendedName>
    <alternativeName>
        <fullName evidence="3">DNA-directed RNA polymerase II 140 kDa polypeptide</fullName>
    </alternativeName>
    <alternativeName>
        <fullName evidence="5">RNA polymerase II subunit B</fullName>
    </alternativeName>
</protein>
<gene>
    <name evidence="5" type="primary">Polr2B</name>
    <name evidence="2" type="synonym">RP140</name>
    <name evidence="4" type="synonym">RPB2</name>
    <name evidence="3" type="synonym">RpII140</name>
    <name evidence="5" type="ORF">CG3180</name>
</gene>
<keyword id="KW-0002">3D-structure</keyword>
<keyword id="KW-0240">DNA-directed RNA polymerase</keyword>
<keyword id="KW-0460">Magnesium</keyword>
<keyword id="KW-0479">Metal-binding</keyword>
<keyword id="KW-0548">Nucleotidyltransferase</keyword>
<keyword id="KW-0539">Nucleus</keyword>
<keyword id="KW-1185">Reference proteome</keyword>
<keyword id="KW-0804">Transcription</keyword>
<keyword id="KW-0808">Transferase</keyword>
<keyword id="KW-0862">Zinc</keyword>
<keyword id="KW-0863">Zinc-finger</keyword>
<feature type="chain" id="PRO_0000048084" description="DNA-directed RNA polymerase II subunit RPB2">
    <location>
        <begin position="1"/>
        <end position="1176"/>
    </location>
</feature>
<feature type="zinc finger region" description="C4-type">
    <location>
        <begin position="1121"/>
        <end position="1142"/>
    </location>
</feature>
<feature type="binding site" evidence="1">
    <location>
        <position position="794"/>
    </location>
    <ligand>
        <name>Mg(2+)</name>
        <dbReference type="ChEBI" id="CHEBI:18420"/>
        <note>ligand shared with RPB1</note>
    </ligand>
</feature>
<feature type="binding site" evidence="1">
    <location>
        <position position="1121"/>
    </location>
    <ligand>
        <name>Zn(2+)</name>
        <dbReference type="ChEBI" id="CHEBI:29105"/>
    </ligand>
</feature>
<feature type="binding site" evidence="1">
    <location>
        <position position="1124"/>
    </location>
    <ligand>
        <name>Zn(2+)</name>
        <dbReference type="ChEBI" id="CHEBI:29105"/>
    </ligand>
</feature>
<feature type="binding site" evidence="1">
    <location>
        <position position="1139"/>
    </location>
    <ligand>
        <name>Zn(2+)</name>
        <dbReference type="ChEBI" id="CHEBI:29105"/>
    </ligand>
</feature>
<feature type="binding site" evidence="1">
    <location>
        <position position="1142"/>
    </location>
    <ligand>
        <name>Zn(2+)</name>
        <dbReference type="ChEBI" id="CHEBI:29105"/>
    </ligand>
</feature>
<feature type="sequence conflict" description="In Ref. 1; CAA29180." evidence="4" ref="1">
    <original>A</original>
    <variation>R</variation>
    <location>
        <position position="72"/>
    </location>
</feature>
<feature type="sequence conflict" description="In Ref. 1; CAA29180." evidence="4" ref="1">
    <original>ID</original>
    <variation>MY</variation>
    <location>
        <begin position="666"/>
        <end position="667"/>
    </location>
</feature>